<name>OBG1_ANAMM</name>
<accession>Q5PAS5</accession>
<dbReference type="EC" id="3.6.5.-" evidence="1"/>
<dbReference type="EMBL" id="CP000030">
    <property type="protein sequence ID" value="AAV86605.1"/>
    <property type="molecule type" value="Genomic_DNA"/>
</dbReference>
<dbReference type="RefSeq" id="WP_011114357.1">
    <property type="nucleotide sequence ID" value="NC_004842.2"/>
</dbReference>
<dbReference type="SMR" id="Q5PAS5"/>
<dbReference type="KEGG" id="ama:AM601"/>
<dbReference type="HOGENOM" id="CLU_011747_2_0_5"/>
<dbReference type="GO" id="GO:0005737">
    <property type="term" value="C:cytoplasm"/>
    <property type="evidence" value="ECO:0007669"/>
    <property type="project" value="UniProtKB-SubCell"/>
</dbReference>
<dbReference type="GO" id="GO:0005525">
    <property type="term" value="F:GTP binding"/>
    <property type="evidence" value="ECO:0007669"/>
    <property type="project" value="UniProtKB-UniRule"/>
</dbReference>
<dbReference type="GO" id="GO:0003924">
    <property type="term" value="F:GTPase activity"/>
    <property type="evidence" value="ECO:0007669"/>
    <property type="project" value="UniProtKB-UniRule"/>
</dbReference>
<dbReference type="GO" id="GO:0000287">
    <property type="term" value="F:magnesium ion binding"/>
    <property type="evidence" value="ECO:0007669"/>
    <property type="project" value="InterPro"/>
</dbReference>
<dbReference type="GO" id="GO:0042254">
    <property type="term" value="P:ribosome biogenesis"/>
    <property type="evidence" value="ECO:0007669"/>
    <property type="project" value="UniProtKB-UniRule"/>
</dbReference>
<dbReference type="CDD" id="cd01898">
    <property type="entry name" value="Obg"/>
    <property type="match status" value="1"/>
</dbReference>
<dbReference type="FunFam" id="2.70.210.12:FF:000001">
    <property type="entry name" value="GTPase Obg"/>
    <property type="match status" value="1"/>
</dbReference>
<dbReference type="Gene3D" id="2.70.210.12">
    <property type="entry name" value="GTP1/OBG domain"/>
    <property type="match status" value="1"/>
</dbReference>
<dbReference type="Gene3D" id="3.40.50.300">
    <property type="entry name" value="P-loop containing nucleotide triphosphate hydrolases"/>
    <property type="match status" value="1"/>
</dbReference>
<dbReference type="HAMAP" id="MF_01454">
    <property type="entry name" value="GTPase_Obg"/>
    <property type="match status" value="1"/>
</dbReference>
<dbReference type="InterPro" id="IPR031167">
    <property type="entry name" value="G_OBG"/>
</dbReference>
<dbReference type="InterPro" id="IPR006073">
    <property type="entry name" value="GTP-bd"/>
</dbReference>
<dbReference type="InterPro" id="IPR014100">
    <property type="entry name" value="GTP-bd_Obg/CgtA"/>
</dbReference>
<dbReference type="InterPro" id="IPR006074">
    <property type="entry name" value="GTP1-OBG_CS"/>
</dbReference>
<dbReference type="InterPro" id="IPR006169">
    <property type="entry name" value="GTP1_OBG_dom"/>
</dbReference>
<dbReference type="InterPro" id="IPR036726">
    <property type="entry name" value="GTP1_OBG_dom_sf"/>
</dbReference>
<dbReference type="InterPro" id="IPR045086">
    <property type="entry name" value="OBG_GTPase"/>
</dbReference>
<dbReference type="InterPro" id="IPR027417">
    <property type="entry name" value="P-loop_NTPase"/>
</dbReference>
<dbReference type="NCBIfam" id="TIGR02729">
    <property type="entry name" value="Obg_CgtA"/>
    <property type="match status" value="1"/>
</dbReference>
<dbReference type="NCBIfam" id="NF008956">
    <property type="entry name" value="PRK12299.1"/>
    <property type="match status" value="1"/>
</dbReference>
<dbReference type="PANTHER" id="PTHR11702">
    <property type="entry name" value="DEVELOPMENTALLY REGULATED GTP-BINDING PROTEIN-RELATED"/>
    <property type="match status" value="1"/>
</dbReference>
<dbReference type="PANTHER" id="PTHR11702:SF31">
    <property type="entry name" value="MITOCHONDRIAL RIBOSOME-ASSOCIATED GTPASE 2"/>
    <property type="match status" value="1"/>
</dbReference>
<dbReference type="Pfam" id="PF01018">
    <property type="entry name" value="GTP1_OBG"/>
    <property type="match status" value="1"/>
</dbReference>
<dbReference type="Pfam" id="PF01926">
    <property type="entry name" value="MMR_HSR1"/>
    <property type="match status" value="1"/>
</dbReference>
<dbReference type="PIRSF" id="PIRSF002401">
    <property type="entry name" value="GTP_bd_Obg/CgtA"/>
    <property type="match status" value="1"/>
</dbReference>
<dbReference type="PRINTS" id="PR00326">
    <property type="entry name" value="GTP1OBG"/>
</dbReference>
<dbReference type="SUPFAM" id="SSF82051">
    <property type="entry name" value="Obg GTP-binding protein N-terminal domain"/>
    <property type="match status" value="1"/>
</dbReference>
<dbReference type="SUPFAM" id="SSF52540">
    <property type="entry name" value="P-loop containing nucleoside triphosphate hydrolases"/>
    <property type="match status" value="1"/>
</dbReference>
<dbReference type="PROSITE" id="PS51710">
    <property type="entry name" value="G_OBG"/>
    <property type="match status" value="1"/>
</dbReference>
<dbReference type="PROSITE" id="PS00905">
    <property type="entry name" value="GTP1_OBG"/>
    <property type="match status" value="1"/>
</dbReference>
<dbReference type="PROSITE" id="PS51883">
    <property type="entry name" value="OBG"/>
    <property type="match status" value="1"/>
</dbReference>
<comment type="function">
    <text evidence="1">An essential GTPase which binds GTP, GDP and possibly (p)ppGpp with moderate affinity, with high nucleotide exchange rates and a fairly low GTP hydrolysis rate. Plays a role in control of the cell cycle, stress response, ribosome biogenesis and in those bacteria that undergo differentiation, in morphogenesis control.</text>
</comment>
<comment type="cofactor">
    <cofactor evidence="1">
        <name>Mg(2+)</name>
        <dbReference type="ChEBI" id="CHEBI:18420"/>
    </cofactor>
</comment>
<comment type="subunit">
    <text evidence="1">Monomer.</text>
</comment>
<comment type="subcellular location">
    <subcellularLocation>
        <location evidence="1">Cytoplasm</location>
    </subcellularLocation>
</comment>
<comment type="similarity">
    <text evidence="1">Belongs to the TRAFAC class OBG-HflX-like GTPase superfamily. OBG GTPase family.</text>
</comment>
<reference key="1">
    <citation type="journal article" date="2005" name="Proc. Natl. Acad. Sci. U.S.A.">
        <title>Complete genome sequencing of Anaplasma marginale reveals that the surface is skewed to two superfamilies of outer membrane proteins.</title>
        <authorList>
            <person name="Brayton K.A."/>
            <person name="Kappmeyer L.S."/>
            <person name="Herndon D.R."/>
            <person name="Dark M.J."/>
            <person name="Tibbals D.L."/>
            <person name="Palmer G.H."/>
            <person name="McGuire T.C."/>
            <person name="Knowles D.P. Jr."/>
        </authorList>
    </citation>
    <scope>NUCLEOTIDE SEQUENCE [LARGE SCALE GENOMIC DNA]</scope>
    <source>
        <strain>St. Maries</strain>
    </source>
</reference>
<feature type="chain" id="PRO_0000385699" description="GTPase Obg 1">
    <location>
        <begin position="1"/>
        <end position="348"/>
    </location>
</feature>
<feature type="domain" description="Obg" evidence="2">
    <location>
        <begin position="1"/>
        <end position="159"/>
    </location>
</feature>
<feature type="domain" description="OBG-type G" evidence="1">
    <location>
        <begin position="160"/>
        <end position="329"/>
    </location>
</feature>
<feature type="binding site" evidence="1">
    <location>
        <begin position="166"/>
        <end position="173"/>
    </location>
    <ligand>
        <name>GTP</name>
        <dbReference type="ChEBI" id="CHEBI:37565"/>
    </ligand>
</feature>
<feature type="binding site" evidence="1">
    <location>
        <position position="173"/>
    </location>
    <ligand>
        <name>Mg(2+)</name>
        <dbReference type="ChEBI" id="CHEBI:18420"/>
    </ligand>
</feature>
<feature type="binding site" evidence="1">
    <location>
        <begin position="191"/>
        <end position="195"/>
    </location>
    <ligand>
        <name>GTP</name>
        <dbReference type="ChEBI" id="CHEBI:37565"/>
    </ligand>
</feature>
<feature type="binding site" evidence="1">
    <location>
        <position position="193"/>
    </location>
    <ligand>
        <name>Mg(2+)</name>
        <dbReference type="ChEBI" id="CHEBI:18420"/>
    </ligand>
</feature>
<feature type="binding site" evidence="1">
    <location>
        <begin position="212"/>
        <end position="215"/>
    </location>
    <ligand>
        <name>GTP</name>
        <dbReference type="ChEBI" id="CHEBI:37565"/>
    </ligand>
</feature>
<feature type="binding site" evidence="1">
    <location>
        <begin position="279"/>
        <end position="282"/>
    </location>
    <ligand>
        <name>GTP</name>
        <dbReference type="ChEBI" id="CHEBI:37565"/>
    </ligand>
</feature>
<feature type="binding site" evidence="1">
    <location>
        <begin position="310"/>
        <end position="312"/>
    </location>
    <ligand>
        <name>GTP</name>
        <dbReference type="ChEBI" id="CHEBI:37565"/>
    </ligand>
</feature>
<gene>
    <name evidence="1" type="primary">obg1</name>
    <name type="ordered locus">AM601</name>
</gene>
<sequence length="348" mass="37427">MSFVDEAKIHVKGGKGGDGCVSFRREKFIEFGGPDGGNGGNGGSVIFIASSAVNTLLYFRYNQHIRAENGKAGSGKGKFGAAGRNRVVEVPVGTQLYDEDGNTLIADLNNIGQQYTVAAGGRGGIGNAQYKSSTNRAPTYFTYGTLGEEHCVLLKLKIVSDVGIIGMPNAGKSSLLSRCTASKTKVSDYPFTTLEPHLGVAYANGCELVLADIPGLIENASSGAGLGHKFLKHIERCVILLHLVDCSLPDIVSAYELVRQELKLHSQELAGKQEVVILNKCDLLSEGEVREKQKLLESSTKKEVITLSMGDELDSLIVFLHAQVKKAVVTEPSDTSFDPFLYVHYNKK</sequence>
<proteinExistence type="inferred from homology"/>
<keyword id="KW-0963">Cytoplasm</keyword>
<keyword id="KW-0342">GTP-binding</keyword>
<keyword id="KW-0378">Hydrolase</keyword>
<keyword id="KW-0460">Magnesium</keyword>
<keyword id="KW-0479">Metal-binding</keyword>
<keyword id="KW-0547">Nucleotide-binding</keyword>
<protein>
    <recommendedName>
        <fullName evidence="1">GTPase Obg 1</fullName>
        <ecNumber evidence="1">3.6.5.-</ecNumber>
    </recommendedName>
    <alternativeName>
        <fullName evidence="1">GTP-binding protein Obg 1</fullName>
    </alternativeName>
</protein>
<evidence type="ECO:0000255" key="1">
    <source>
        <dbReference type="HAMAP-Rule" id="MF_01454"/>
    </source>
</evidence>
<evidence type="ECO:0000255" key="2">
    <source>
        <dbReference type="PROSITE-ProRule" id="PRU01231"/>
    </source>
</evidence>
<organism>
    <name type="scientific">Anaplasma marginale (strain St. Maries)</name>
    <dbReference type="NCBI Taxonomy" id="234826"/>
    <lineage>
        <taxon>Bacteria</taxon>
        <taxon>Pseudomonadati</taxon>
        <taxon>Pseudomonadota</taxon>
        <taxon>Alphaproteobacteria</taxon>
        <taxon>Rickettsiales</taxon>
        <taxon>Anaplasmataceae</taxon>
        <taxon>Anaplasma</taxon>
    </lineage>
</organism>